<name>CBID_CLOPS</name>
<proteinExistence type="inferred from homology"/>
<reference key="1">
    <citation type="journal article" date="2006" name="Genome Res.">
        <title>Skewed genomic variability in strains of the toxigenic bacterial pathogen, Clostridium perfringens.</title>
        <authorList>
            <person name="Myers G.S.A."/>
            <person name="Rasko D.A."/>
            <person name="Cheung J.K."/>
            <person name="Ravel J."/>
            <person name="Seshadri R."/>
            <person name="DeBoy R.T."/>
            <person name="Ren Q."/>
            <person name="Varga J."/>
            <person name="Awad M.M."/>
            <person name="Brinkac L.M."/>
            <person name="Daugherty S.C."/>
            <person name="Haft D.H."/>
            <person name="Dodson R.J."/>
            <person name="Madupu R."/>
            <person name="Nelson W.C."/>
            <person name="Rosovitz M.J."/>
            <person name="Sullivan S.A."/>
            <person name="Khouri H."/>
            <person name="Dimitrov G.I."/>
            <person name="Watkins K.L."/>
            <person name="Mulligan S."/>
            <person name="Benton J."/>
            <person name="Radune D."/>
            <person name="Fisher D.J."/>
            <person name="Atkins H.S."/>
            <person name="Hiscox T."/>
            <person name="Jost B.H."/>
            <person name="Billington S.J."/>
            <person name="Songer J.G."/>
            <person name="McClane B.A."/>
            <person name="Titball R.W."/>
            <person name="Rood J.I."/>
            <person name="Melville S.B."/>
            <person name="Paulsen I.T."/>
        </authorList>
    </citation>
    <scope>NUCLEOTIDE SEQUENCE [LARGE SCALE GENOMIC DNA]</scope>
    <source>
        <strain>SM101 / Type A</strain>
    </source>
</reference>
<protein>
    <recommendedName>
        <fullName evidence="1">Cobalt-precorrin-5B C(1)-methyltransferase</fullName>
        <ecNumber evidence="1">2.1.1.195</ecNumber>
    </recommendedName>
    <alternativeName>
        <fullName evidence="1">Cobalt-precorrin-6A synthase</fullName>
    </alternativeName>
</protein>
<dbReference type="EC" id="2.1.1.195" evidence="1"/>
<dbReference type="EMBL" id="CP000312">
    <property type="protein sequence ID" value="ABG87407.1"/>
    <property type="molecule type" value="Genomic_DNA"/>
</dbReference>
<dbReference type="RefSeq" id="WP_011592232.1">
    <property type="nucleotide sequence ID" value="NC_008262.1"/>
</dbReference>
<dbReference type="SMR" id="Q0STJ5"/>
<dbReference type="KEGG" id="cpr:CPR_1240"/>
<dbReference type="UniPathway" id="UPA00148">
    <property type="reaction ID" value="UER00227"/>
</dbReference>
<dbReference type="Proteomes" id="UP000001824">
    <property type="component" value="Chromosome"/>
</dbReference>
<dbReference type="GO" id="GO:0043780">
    <property type="term" value="F:cobalt-precorrin-5B C1-methyltransferase activity"/>
    <property type="evidence" value="ECO:0007669"/>
    <property type="project" value="RHEA"/>
</dbReference>
<dbReference type="GO" id="GO:0019251">
    <property type="term" value="P:anaerobic cobalamin biosynthetic process"/>
    <property type="evidence" value="ECO:0007669"/>
    <property type="project" value="UniProtKB-UniRule"/>
</dbReference>
<dbReference type="GO" id="GO:0032259">
    <property type="term" value="P:methylation"/>
    <property type="evidence" value="ECO:0007669"/>
    <property type="project" value="UniProtKB-KW"/>
</dbReference>
<dbReference type="Gene3D" id="3.30.2110.10">
    <property type="entry name" value="CbiD-like"/>
    <property type="match status" value="1"/>
</dbReference>
<dbReference type="HAMAP" id="MF_00787">
    <property type="entry name" value="CbiD"/>
    <property type="match status" value="1"/>
</dbReference>
<dbReference type="InterPro" id="IPR002748">
    <property type="entry name" value="CbiD"/>
</dbReference>
<dbReference type="InterPro" id="IPR036074">
    <property type="entry name" value="CbiD_sf"/>
</dbReference>
<dbReference type="NCBIfam" id="TIGR00312">
    <property type="entry name" value="cbiD"/>
    <property type="match status" value="1"/>
</dbReference>
<dbReference type="PANTHER" id="PTHR35863">
    <property type="entry name" value="COBALT-PRECORRIN-5B C(1)-METHYLTRANSFERASE"/>
    <property type="match status" value="1"/>
</dbReference>
<dbReference type="PANTHER" id="PTHR35863:SF1">
    <property type="entry name" value="COBALT-PRECORRIN-5B C(1)-METHYLTRANSFERASE"/>
    <property type="match status" value="1"/>
</dbReference>
<dbReference type="Pfam" id="PF01888">
    <property type="entry name" value="CbiD"/>
    <property type="match status" value="1"/>
</dbReference>
<dbReference type="PIRSF" id="PIRSF026782">
    <property type="entry name" value="CbiD"/>
    <property type="match status" value="1"/>
</dbReference>
<dbReference type="SUPFAM" id="SSF111342">
    <property type="entry name" value="CbiD-like"/>
    <property type="match status" value="1"/>
</dbReference>
<accession>Q0STJ5</accession>
<feature type="chain" id="PRO_0000257758" description="Cobalt-precorrin-5B C(1)-methyltransferase">
    <location>
        <begin position="1"/>
        <end position="365"/>
    </location>
</feature>
<comment type="function">
    <text evidence="1">Catalyzes the methylation of C-1 in cobalt-precorrin-5B to form cobalt-precorrin-6A.</text>
</comment>
<comment type="catalytic activity">
    <reaction evidence="1">
        <text>Co-precorrin-5B + S-adenosyl-L-methionine = Co-precorrin-6A + S-adenosyl-L-homocysteine</text>
        <dbReference type="Rhea" id="RHEA:26285"/>
        <dbReference type="ChEBI" id="CHEBI:57856"/>
        <dbReference type="ChEBI" id="CHEBI:59789"/>
        <dbReference type="ChEBI" id="CHEBI:60063"/>
        <dbReference type="ChEBI" id="CHEBI:60064"/>
        <dbReference type="EC" id="2.1.1.195"/>
    </reaction>
</comment>
<comment type="pathway">
    <text evidence="1">Cofactor biosynthesis; adenosylcobalamin biosynthesis; cob(II)yrinate a,c-diamide from sirohydrochlorin (anaerobic route): step 6/10.</text>
</comment>
<comment type="similarity">
    <text evidence="1">Belongs to the CbiD family.</text>
</comment>
<keyword id="KW-0169">Cobalamin biosynthesis</keyword>
<keyword id="KW-0489">Methyltransferase</keyword>
<keyword id="KW-0949">S-adenosyl-L-methionine</keyword>
<keyword id="KW-0808">Transferase</keyword>
<sequence>MFDMYIESGGKKLRCGYTTGSCAAAAAKAATYMLFNKKDISVIEIDTPKNIKLNLEIQDIQVEKNSISCSIVKDGGDDIDATSGLEIFAKAEEIEEGFELCGGEGVGVVTKEGLFVEKGQPAINPVPREMIKKEVLSVLPKDKGVRITIFVPRGREIAKKTFNPRLGIVNGISILGTTGIVYPMSEEALKESIRIEIRQKSVNNKDLVFVFGNMGERFLRERGYKKDNIVVISNYVGFSIECALAQGIKDLTIVGHIGKLSKIAFGCFNTHSRVSDVRLEVIALELTLMGYDLELVQKVLDQKTSEGAVRLLGDDFPMLYERIGEKVLKRLDIYAYGEANFNILMYYGSKEMKLLYESKNSNLFD</sequence>
<evidence type="ECO:0000255" key="1">
    <source>
        <dbReference type="HAMAP-Rule" id="MF_00787"/>
    </source>
</evidence>
<organism>
    <name type="scientific">Clostridium perfringens (strain SM101 / Type A)</name>
    <dbReference type="NCBI Taxonomy" id="289380"/>
    <lineage>
        <taxon>Bacteria</taxon>
        <taxon>Bacillati</taxon>
        <taxon>Bacillota</taxon>
        <taxon>Clostridia</taxon>
        <taxon>Eubacteriales</taxon>
        <taxon>Clostridiaceae</taxon>
        <taxon>Clostridium</taxon>
    </lineage>
</organism>
<gene>
    <name evidence="1" type="primary">cbiD</name>
    <name type="ordered locus">CPR_1240</name>
</gene>